<protein>
    <recommendedName>
        <fullName>Cytoplasmic dynein 2 heavy chain 1</fullName>
    </recommendedName>
    <alternativeName>
        <fullName>Cytoplasmic dynein 2 heavy chain</fullName>
    </alternativeName>
    <alternativeName>
        <fullName>Dynein cytoplasmic heavy chain 2</fullName>
    </alternativeName>
    <alternativeName>
        <fullName>Dynein heavy chain isotype 1B</fullName>
    </alternativeName>
    <alternativeName>
        <fullName>Dynein-like protein 4</fullName>
    </alternativeName>
</protein>
<sequence>MAGSLSDVRKLFLFTTTQNYFGLRPELWDQTPLSNCPEVNNFLDDGNQMLLRVQRSDAGLAFSNTIDFDDTKDKVLVFFKLRPEVITDGNLHTNILVSSMLESPINSLYQAVRQVFAPMLLKDQEWSRNFDPKLQNLLSELEAGLGVVLRKSDTNLPKLKLKEDDTRGILTPSDEFQFWIEQAHRGSKQISKERASYFKELFETIAREFYNLDSLSLLEVVDLVETTRDVVDDVWRQAEHDHYPESRMLHLLDVIGGSFGRFVQKKLGSLKLWEDPYYLVKENLKAGISICEQWVIVCSHLTGQVWQRYVPHPWKSEKYFPETLDRLGKRLEEVLAIRTIHEKLLYFLPASEERIVCLSRVFEPFTGVNPVQYNPYTEPLWKAAVSQYEKIIAPAEQKIAGKLKNYISEIQDSPQQLLQAFLKYKELVKRPTISKELMLERETLLARLGDSAKDFRLDFENRCRGIPGDASGPLSGKNLSEVVNNIVWVRQLELKVDDTIKIAEALLSDLSGFRSFHRSAEDLLDQFKLYEQEQFDDWSREVQSGLSDSRSGLCIEANSRIMELDPNDGALKVHYSDRLVILLREVRQLSALGFVIPAKIQQVANVAQKFCKQAIILKQVAHFYNSIDQQMIQSQRPMMLQSALAFEQIIKNSKAGSGGKSQITWDNPKELEGYIQKLQNAAERLATENRRLRKWHITFCEKVVILMNIDLLRQQQRWKDGLQELRTGLASVAAQGFQPSDMRAWRQHWNHQLYKALEHQYQMGLEALNENLPEINVDLTYKQGRLQFRPPFEEIRAKYYREMKRFIGIPNQFKGVGGAGDESIFSVMIDRNASGFLTIYSKAEDLFRRLSAVLHQHKEWVVIGQVDMEALVEKNLSTVHDWEKNFKALKIKGKEVERLPSAVKVDCLNINCSPVKTVIDDLIQKLFDLLVLSLKKSIQTHIHEIDTFVTEAMKVLTVIPQSVEEIGDTNLQYSNLQDRRPEILPLFQEAEDKNRLLRTVAGGGVETVSNLRAKWDKFELMMESHQLMIKDQIEVMKGNVKSRLQIYYQELDKFKARWDQLKPGDDIIETGQQNTMDQSAKSIKEKKIEFDDLEVIRKKLVDDCHHFGLEESNFSLAYSISKDIESCAQIWALYEEFQQGLQEMAKEDWITYRTKIYIFEEFLINWHERLRKVEEHSVMTVKLQSEVDRYKIIIPILKYVRGEHLSPDHWLDLFRLLGLPRGTSLEKLLFGDLLRVADTIVEKASDLKDLNSRAQGEVTIREALRELDLWGVGAVFSLIDYEDSQNRTIKLIKDWKDIVNQVGDNRCLLQSLKDSPYYKGFEDKVSIWERKLAQLDEYLQNLNHIQRKWVYLEPIFGRGALPKEQTRFNKVDEDFRSIMMDIRKDSRVTTLTTHAGIRNTLLTILDQLQRCQKSLNEFLEEKRSAFPRFYFIGDDDLLEILGQSTNPSVIQSHLKKLFAGINSVCFDEESKHITAMRSLEGEVVPFKSKVLLSNNVEAWLNDLALEMKQTLKQLLKECVTAGRSSQGAIDPSLFPSQILCLAEQIKFTEDVEDAIRDHSLHQIEAQLAAKLERYTSVDTSSEDPGNSESGILELKLKTLILDIIHNIDIVKQLNQAQVHTTDDWAWKKQVRFYMKSDHTCYVQMVDSELQYTYEYQGNAPKLVYTPLTDKCYLTLTQAMKMGLGGNPYGPAGTGKTESVKALGGLLGRQVLVFNCDEGIDVKSMGRIFVGLVKCGAWGCFDEFNRLEEAVLSAVSMQIQTIQDALKNHRSVCELLGKEVEVNANSGIFITMNPAGKGYGGRQKLPDNLKQLFRPVAMSRPDNDLIAEVILYSEGFKDAKELGRKLVAIFNLSRELLTPQQHYDWGLRALKTVLRGSGNLLRQLKKSGTKQDVNENHIVVQALRLNTMSKFTFADCTRFDALIKDVFPGIDFKEVEYNELSSALKQVFEEANYEVIPNQMKKALELYEQLRQRTGVVIVGPSGAGKSTLWRMLRAALCKIGKVVKQYTMNPKAMPRHQLLGHIDMDTREWSDGVLTNSARQVVREPQDVSSWIICDGDIDPEWIESLNSVLDDNRLLTMPSGERIQFGPNVNFVFETHDLSCASPATISRMGMIFLSDEETDLNSLIKSWLRNQPVEYRSNLENWIGDYFSKALQWVLKQNDYVVETSLVGTVMNGLSHLHGCKYHDQFIINLIRGLGGNLNMKSRLEFTKEVFNWARETPPDSHRPMDTYFDCDRGQLASYVLKKPESLTADDFSSGHSLPVIQTPDMQRGLDYFKPWLSSETKQPFILVGPEGCGKGMLLRYAFSQLRSTEIATIHCSAQTTSRHLLQKLSQTCMVISTNTGRVYRPKDCERLVLYLKDINLPKLDKWGTSTLVAFLQQVLTYQGFYDENLEWVGLENIQIVASMSAGGRLGRHKLTTRFTSIVRLCAVDYPEREQLQTIYGAYLEAVLHKNLKNHSIWGSSSKIYLLAGSMVQVYEQVRAKFTVDDYSHYFFTPCILTQWVLGLFRYDLEGGSSNHPLDYVLEVVAYEARRLFRDKIVGVKELHLFDNILTSVLQGDWGSDILDNMADSFYVTWGAQHISGAKIAPGQPLPPHGKPLGKLSSADLKDVIKKGLIHYGRDNQNLDILLFQEVLEYMSRIDRVLSFPGGSLLLAGRSGVGRRTVTSLVSHMHGAVLFSPKISRGYEPKQFRTDLKHVLHLAGIEAQQVVLLLEDYQFVHPTFLEMINSLLSSGEVPGLYTLEELEPLLLPLKDQASQDGFFGPVFNYFTYRIQQNLHIVLIMDSANLNFIINCESNPALHKKCRVLWMEGWSDSSMKKIPEMLFSEADIEEKYEKKRKDEKKKSSVDPDFIKSFLLIHESCKAYGATPSRYMTFLRVYSAISSSKRKELLKRQSHLQAGVSKLNEAKALVDELNRKAGEQSILLRIKQDEADSALQEITVSMQDASEQKTELERLKHRIAEEVVKIEERKSKIDDELKEVQPLVNEAKLAVGNIRPESLSEIRSLRMPPDVIRDILEGVLRLMGIFDTSWVSMKSFLAKRGVREDIATFDARNIPKEIRESVEELLFKNKASFDPKNAKRASTAAAPLAAWVKANVQYSHVLERIQPLETEQSGLELNLKKTEDRKRKLEDLLNSVGQKVSELKEKFQSRTSEAAKLEAEVSKAQETIKAAEVLISQLDREHRRWNAQVAEIAEELATLPKRAQLAAAFITYLSAAPEGLRKNCLEEWTKAAGLEKFDLRRFLCTESEQLIWKSEGLPSDDLSIENALVILQSRVCPFLIDPSSQATEWLKTHLKDSHLEVINQQDSNFITALELAVRFGKTLIIQEMDGVEPVLYPLLRRDLVAQGPRYVVQIGDKIIDYNEDFRLFLSTRNPNPFIPPDAASIVTEVNFTTTRSGLRGQLLALTIQHEKPDLEEQKTKLLQQEEDKKIQLARLEESLLETLATSQGNILENKDLIESLNQTKASSALIQDSLKESYKLQISLDRERDAYLPLAESASKMYFIISDLSKINNMYRFSLASFLRLFQRALQNKQDSESTEQRIQCLVNSLKHMVYEYICRCLFKADQLMFALHFVRGMHPEFFQENEWDTFTGVVVGDMLRKADSQQRIRDQLPSWIDQERSWAVATLKISLPGLYQTLCFEDGTLWRTYYHHSMCEQEFPSILAKKVSLFQQVLVVQALRPDRLQSAMALFACKALGLKELSPLPLNLKRLYKETLEIEPILIIISPGADPSQELQELANAERSSERYHQVAMGQGQADLAIQMLKECARNGDWLCLKNLHLVVSWLPVLEKELNTLQPKESFRLWLTAEVHPNFTPILLQSSLKITYESPPGLKKNLMRTYESWTPEQISKKDNIHRAHALFSLAWFHAACQERRNFIPQGWTKFYEFSLSDLRAGYHVIDRLFDGSKDVQWEFVHGLLENSIYGGRIDNYFDLRVLQSYLKQFFNSSIIDVLNQRNKKSIFPYSISLPDSCSILDYRAVIEKLPEDDKPSFFGLPANIARSSQRMTSSQVISQLRILGRSVTAGCKFDREIWSNELSPVLNLWKKLNQNSNLIHQKVSPPNDRQGSPILSFIILEQFNAIRLVQSVHQSLAALSKVIRGTTLLSSEVQKLASALLNQKCPLTWQSKWEGPEDPLQYLRGLVARTLAIQNWVEKAEKQALLADTLDLSELFHPDTFLNALRQETARATGCSVDSLKFVASWKGRLQEAKLQIKISGLLLEGCSFDGSRLSENQHDSPSVSSVLPCYMGWTPQGSYGPYSPDECISLPVYTSAERDCVVTNIDVPCGGNQDQWIQCGAALFLKNQ</sequence>
<keyword id="KW-0067">ATP-binding</keyword>
<keyword id="KW-1003">Cell membrane</keyword>
<keyword id="KW-0966">Cell projection</keyword>
<keyword id="KW-0969">Cilium</keyword>
<keyword id="KW-0970">Cilium biogenesis/degradation</keyword>
<keyword id="KW-0175">Coiled coil</keyword>
<keyword id="KW-0963">Cytoplasm</keyword>
<keyword id="KW-0206">Cytoskeleton</keyword>
<keyword id="KW-0217">Developmental protein</keyword>
<keyword id="KW-0243">Dynein</keyword>
<keyword id="KW-0472">Membrane</keyword>
<keyword id="KW-0493">Microtubule</keyword>
<keyword id="KW-0505">Motor protein</keyword>
<keyword id="KW-0547">Nucleotide-binding</keyword>
<keyword id="KW-1185">Reference proteome</keyword>
<evidence type="ECO:0000250" key="1"/>
<evidence type="ECO:0000250" key="2">
    <source>
        <dbReference type="UniProtKB" id="Q45VK7"/>
    </source>
</evidence>
<evidence type="ECO:0000255" key="3"/>
<evidence type="ECO:0000269" key="4">
    <source>
    </source>
</evidence>
<evidence type="ECO:0000269" key="5">
    <source>
    </source>
</evidence>
<evidence type="ECO:0000269" key="6">
    <source>
    </source>
</evidence>
<evidence type="ECO:0000269" key="7">
    <source>
    </source>
</evidence>
<evidence type="ECO:0000305" key="8"/>
<dbReference type="EMBL" id="AB041881">
    <property type="protein sequence ID" value="BAA97048.1"/>
    <property type="molecule type" value="mRNA"/>
</dbReference>
<dbReference type="EMBL" id="U61748">
    <property type="protein sequence ID" value="AAC52802.1"/>
    <property type="molecule type" value="mRNA"/>
</dbReference>
<dbReference type="EMBL" id="D26495">
    <property type="protein sequence ID" value="BAA05503.1"/>
    <property type="molecule type" value="mRNA"/>
</dbReference>
<dbReference type="PIR" id="I70174">
    <property type="entry name" value="I70174"/>
</dbReference>
<dbReference type="RefSeq" id="NP_075413.1">
    <property type="nucleotide sequence ID" value="NM_023024.1"/>
</dbReference>
<dbReference type="SMR" id="Q9JJ79"/>
<dbReference type="BioGRID" id="249321">
    <property type="interactions" value="1"/>
</dbReference>
<dbReference type="CORUM" id="Q9JJ79"/>
<dbReference type="FunCoup" id="Q9JJ79">
    <property type="interactions" value="891"/>
</dbReference>
<dbReference type="STRING" id="10116.ENSRNOP00000043252"/>
<dbReference type="CarbonylDB" id="Q9JJ79"/>
<dbReference type="GlyGen" id="Q9JJ79">
    <property type="glycosylation" value="1 site"/>
</dbReference>
<dbReference type="iPTMnet" id="Q9JJ79"/>
<dbReference type="PhosphoSitePlus" id="Q9JJ79"/>
<dbReference type="jPOST" id="Q9JJ79"/>
<dbReference type="PaxDb" id="10116-ENSRNOP00000043252"/>
<dbReference type="GeneID" id="65209"/>
<dbReference type="KEGG" id="rno:65209"/>
<dbReference type="UCSC" id="RGD:71042">
    <property type="organism name" value="rat"/>
</dbReference>
<dbReference type="AGR" id="RGD:71042"/>
<dbReference type="CTD" id="79659"/>
<dbReference type="RGD" id="71042">
    <property type="gene designation" value="Dync2h1"/>
</dbReference>
<dbReference type="eggNOG" id="KOG3595">
    <property type="taxonomic scope" value="Eukaryota"/>
</dbReference>
<dbReference type="InParanoid" id="Q9JJ79"/>
<dbReference type="PhylomeDB" id="Q9JJ79"/>
<dbReference type="Reactome" id="R-RNO-5610787">
    <property type="pathway name" value="Hedgehog 'off' state"/>
</dbReference>
<dbReference type="Reactome" id="R-RNO-5620924">
    <property type="pathway name" value="Intraflagellar transport"/>
</dbReference>
<dbReference type="PRO" id="PR:Q9JJ79"/>
<dbReference type="Proteomes" id="UP000002494">
    <property type="component" value="Unplaced"/>
</dbReference>
<dbReference type="GO" id="GO:0097729">
    <property type="term" value="C:9+2 motile cilium"/>
    <property type="evidence" value="ECO:0000318"/>
    <property type="project" value="GO_Central"/>
</dbReference>
<dbReference type="GO" id="GO:0045177">
    <property type="term" value="C:apical part of cell"/>
    <property type="evidence" value="ECO:0000314"/>
    <property type="project" value="RGD"/>
</dbReference>
<dbReference type="GO" id="GO:0005930">
    <property type="term" value="C:axoneme"/>
    <property type="evidence" value="ECO:0000266"/>
    <property type="project" value="RGD"/>
</dbReference>
<dbReference type="GO" id="GO:0005868">
    <property type="term" value="C:cytoplasmic dynein complex"/>
    <property type="evidence" value="ECO:0000314"/>
    <property type="project" value="RGD"/>
</dbReference>
<dbReference type="GO" id="GO:0005794">
    <property type="term" value="C:Golgi apparatus"/>
    <property type="evidence" value="ECO:0000266"/>
    <property type="project" value="RGD"/>
</dbReference>
<dbReference type="GO" id="GO:0005874">
    <property type="term" value="C:microtubule"/>
    <property type="evidence" value="ECO:0000266"/>
    <property type="project" value="RGD"/>
</dbReference>
<dbReference type="GO" id="GO:0031514">
    <property type="term" value="C:motile cilium"/>
    <property type="evidence" value="ECO:0000266"/>
    <property type="project" value="RGD"/>
</dbReference>
<dbReference type="GO" id="GO:0005886">
    <property type="term" value="C:plasma membrane"/>
    <property type="evidence" value="ECO:0007669"/>
    <property type="project" value="UniProtKB-SubCell"/>
</dbReference>
<dbReference type="GO" id="GO:0005524">
    <property type="term" value="F:ATP binding"/>
    <property type="evidence" value="ECO:0007669"/>
    <property type="project" value="UniProtKB-KW"/>
</dbReference>
<dbReference type="GO" id="GO:0016887">
    <property type="term" value="F:ATP hydrolysis activity"/>
    <property type="evidence" value="ECO:0007669"/>
    <property type="project" value="InterPro"/>
</dbReference>
<dbReference type="GO" id="GO:0045505">
    <property type="term" value="F:dynein intermediate chain binding"/>
    <property type="evidence" value="ECO:0000318"/>
    <property type="project" value="GO_Central"/>
</dbReference>
<dbReference type="GO" id="GO:0051959">
    <property type="term" value="F:dynein light intermediate chain binding"/>
    <property type="evidence" value="ECO:0000353"/>
    <property type="project" value="WormBase"/>
</dbReference>
<dbReference type="GO" id="GO:0008569">
    <property type="term" value="F:minus-end-directed microtubule motor activity"/>
    <property type="evidence" value="ECO:0000318"/>
    <property type="project" value="GO_Central"/>
</dbReference>
<dbReference type="GO" id="GO:0060271">
    <property type="term" value="P:cilium assembly"/>
    <property type="evidence" value="ECO:0000270"/>
    <property type="project" value="RGD"/>
</dbReference>
<dbReference type="GO" id="GO:0060294">
    <property type="term" value="P:cilium movement involved in cell motility"/>
    <property type="evidence" value="ECO:0000318"/>
    <property type="project" value="GO_Central"/>
</dbReference>
<dbReference type="GO" id="GO:0060976">
    <property type="term" value="P:coronary vasculature development"/>
    <property type="evidence" value="ECO:0000266"/>
    <property type="project" value="RGD"/>
</dbReference>
<dbReference type="GO" id="GO:0007368">
    <property type="term" value="P:determination of left/right symmetry"/>
    <property type="evidence" value="ECO:0000266"/>
    <property type="project" value="RGD"/>
</dbReference>
<dbReference type="GO" id="GO:0009953">
    <property type="term" value="P:dorsal/ventral pattern formation"/>
    <property type="evidence" value="ECO:0000266"/>
    <property type="project" value="RGD"/>
</dbReference>
<dbReference type="GO" id="GO:0030326">
    <property type="term" value="P:embryonic limb morphogenesis"/>
    <property type="evidence" value="ECO:0000266"/>
    <property type="project" value="RGD"/>
</dbReference>
<dbReference type="GO" id="GO:0030900">
    <property type="term" value="P:forebrain development"/>
    <property type="evidence" value="ECO:0000266"/>
    <property type="project" value="RGD"/>
</dbReference>
<dbReference type="GO" id="GO:0007030">
    <property type="term" value="P:Golgi organization"/>
    <property type="evidence" value="ECO:0000266"/>
    <property type="project" value="RGD"/>
</dbReference>
<dbReference type="GO" id="GO:0007507">
    <property type="term" value="P:heart development"/>
    <property type="evidence" value="ECO:0000266"/>
    <property type="project" value="RGD"/>
</dbReference>
<dbReference type="GO" id="GO:0035721">
    <property type="term" value="P:intraciliary retrograde transport"/>
    <property type="evidence" value="ECO:0000266"/>
    <property type="project" value="RGD"/>
</dbReference>
<dbReference type="GO" id="GO:0001822">
    <property type="term" value="P:kidney development"/>
    <property type="evidence" value="ECO:0000266"/>
    <property type="project" value="RGD"/>
</dbReference>
<dbReference type="GO" id="GO:0030182">
    <property type="term" value="P:neuron differentiation"/>
    <property type="evidence" value="ECO:0000266"/>
    <property type="project" value="RGD"/>
</dbReference>
<dbReference type="GO" id="GO:1905515">
    <property type="term" value="P:non-motile cilium assembly"/>
    <property type="evidence" value="ECO:0000266"/>
    <property type="project" value="RGD"/>
</dbReference>
<dbReference type="GO" id="GO:0045880">
    <property type="term" value="P:positive regulation of smoothened signaling pathway"/>
    <property type="evidence" value="ECO:0000266"/>
    <property type="project" value="RGD"/>
</dbReference>
<dbReference type="GO" id="GO:0061512">
    <property type="term" value="P:protein localization to cilium"/>
    <property type="evidence" value="ECO:0000266"/>
    <property type="project" value="RGD"/>
</dbReference>
<dbReference type="GO" id="GO:0016485">
    <property type="term" value="P:protein processing"/>
    <property type="evidence" value="ECO:0000266"/>
    <property type="project" value="RGD"/>
</dbReference>
<dbReference type="GO" id="GO:0021522">
    <property type="term" value="P:spinal cord motor neuron differentiation"/>
    <property type="evidence" value="ECO:0000266"/>
    <property type="project" value="RGD"/>
</dbReference>
<dbReference type="FunFam" id="1.20.920.20:FF:000002">
    <property type="entry name" value="Cytoplasmic dynein 1 heavy chain"/>
    <property type="match status" value="1"/>
</dbReference>
<dbReference type="FunFam" id="1.20.920.30:FF:000006">
    <property type="entry name" value="Cytoplasmic dynein 2 heavy chain 1"/>
    <property type="match status" value="1"/>
</dbReference>
<dbReference type="FunFam" id="3.40.50.300:FF:000706">
    <property type="entry name" value="Cytoplasmic dynein 2 heavy chain 1"/>
    <property type="match status" value="1"/>
</dbReference>
<dbReference type="FunFam" id="3.40.50.300:FF:000710">
    <property type="entry name" value="Cytoplasmic dynein 2 heavy chain 1"/>
    <property type="match status" value="1"/>
</dbReference>
<dbReference type="FunFam" id="3.40.50.300:FF:001810">
    <property type="entry name" value="Cytoplasmic dynein 2 heavy chain 1"/>
    <property type="match status" value="1"/>
</dbReference>
<dbReference type="FunFam" id="3.40.50.300:FF:002654">
    <property type="entry name" value="Cytoplasmic dynein 2 heavy chain 1"/>
    <property type="match status" value="1"/>
</dbReference>
<dbReference type="FunFam" id="1.10.8.710:FF:000006">
    <property type="entry name" value="cytoplasmic dynein 2 heavy chain 1"/>
    <property type="match status" value="1"/>
</dbReference>
<dbReference type="FunFam" id="1.10.8.720:FF:000006">
    <property type="entry name" value="cytoplasmic dynein 2 heavy chain 1"/>
    <property type="match status" value="1"/>
</dbReference>
<dbReference type="FunFam" id="1.20.140.100:FF:000005">
    <property type="entry name" value="cytoplasmic dynein 2 heavy chain 1"/>
    <property type="match status" value="1"/>
</dbReference>
<dbReference type="FunFam" id="1.20.58.1120:FF:000006">
    <property type="entry name" value="cytoplasmic dynein 2 heavy chain 1"/>
    <property type="match status" value="1"/>
</dbReference>
<dbReference type="FunFam" id="3.20.180.20:FF:000002">
    <property type="entry name" value="Cytoplasmic dynein heavy chain 1"/>
    <property type="match status" value="1"/>
</dbReference>
<dbReference type="FunFam" id="3.40.50.300:FF:000071">
    <property type="entry name" value="Cytoplasmic dynein heavy chain 1"/>
    <property type="match status" value="1"/>
</dbReference>
<dbReference type="FunFam" id="1.10.8.1220:FF:000003">
    <property type="entry name" value="Dynein cytoplasmic 2 heavy chain 1"/>
    <property type="match status" value="1"/>
</dbReference>
<dbReference type="FunFam" id="1.20.1270.280:FF:000006">
    <property type="entry name" value="Dynein cytoplasmic 2 heavy chain 1"/>
    <property type="match status" value="1"/>
</dbReference>
<dbReference type="FunFam" id="3.10.490.20:FF:000007">
    <property type="entry name" value="Dynein cytoplasmic 2 heavy chain 1"/>
    <property type="match status" value="1"/>
</dbReference>
<dbReference type="FunFam" id="3.40.50.300:FF:000598">
    <property type="entry name" value="Dynein cytoplasmic 2 heavy chain 1"/>
    <property type="match status" value="1"/>
</dbReference>
<dbReference type="Gene3D" id="1.10.8.1220">
    <property type="match status" value="1"/>
</dbReference>
<dbReference type="Gene3D" id="1.10.8.710">
    <property type="match status" value="1"/>
</dbReference>
<dbReference type="Gene3D" id="1.20.1270.280">
    <property type="match status" value="1"/>
</dbReference>
<dbReference type="Gene3D" id="1.20.58.1120">
    <property type="match status" value="1"/>
</dbReference>
<dbReference type="Gene3D" id="1.20.920.20">
    <property type="match status" value="1"/>
</dbReference>
<dbReference type="Gene3D" id="1.20.920.30">
    <property type="match status" value="1"/>
</dbReference>
<dbReference type="Gene3D" id="3.10.490.20">
    <property type="match status" value="1"/>
</dbReference>
<dbReference type="Gene3D" id="6.10.140.1060">
    <property type="match status" value="1"/>
</dbReference>
<dbReference type="Gene3D" id="1.20.140.100">
    <property type="entry name" value="Dynein heavy chain, N-terminal domain 2"/>
    <property type="match status" value="1"/>
</dbReference>
<dbReference type="Gene3D" id="3.20.180.20">
    <property type="entry name" value="Dynein heavy chain, N-terminal domain 2"/>
    <property type="match status" value="1"/>
</dbReference>
<dbReference type="Gene3D" id="3.40.50.300">
    <property type="entry name" value="P-loop containing nucleotide triphosphate hydrolases"/>
    <property type="match status" value="5"/>
</dbReference>
<dbReference type="Gene3D" id="1.10.8.720">
    <property type="entry name" value="Region D6 of dynein motor"/>
    <property type="match status" value="1"/>
</dbReference>
<dbReference type="InterPro" id="IPR003593">
    <property type="entry name" value="AAA+_ATPase"/>
</dbReference>
<dbReference type="InterPro" id="IPR035699">
    <property type="entry name" value="AAA_6"/>
</dbReference>
<dbReference type="InterPro" id="IPR035706">
    <property type="entry name" value="AAA_9"/>
</dbReference>
<dbReference type="InterPro" id="IPR041658">
    <property type="entry name" value="AAA_lid_11"/>
</dbReference>
<dbReference type="InterPro" id="IPR042219">
    <property type="entry name" value="AAA_lid_11_sf"/>
</dbReference>
<dbReference type="InterPro" id="IPR026983">
    <property type="entry name" value="DHC"/>
</dbReference>
<dbReference type="InterPro" id="IPR054354">
    <property type="entry name" value="DYNC2H1-like_lid"/>
</dbReference>
<dbReference type="InterPro" id="IPR049400">
    <property type="entry name" value="DYNC2H1_AAA_dom"/>
</dbReference>
<dbReference type="InterPro" id="IPR042222">
    <property type="entry name" value="Dynein_2_N"/>
</dbReference>
<dbReference type="InterPro" id="IPR043157">
    <property type="entry name" value="Dynein_AAA1S"/>
</dbReference>
<dbReference type="InterPro" id="IPR041228">
    <property type="entry name" value="Dynein_C"/>
</dbReference>
<dbReference type="InterPro" id="IPR043160">
    <property type="entry name" value="Dynein_C_barrel"/>
</dbReference>
<dbReference type="InterPro" id="IPR024743">
    <property type="entry name" value="Dynein_HC_stalk"/>
</dbReference>
<dbReference type="InterPro" id="IPR024317">
    <property type="entry name" value="Dynein_heavy_chain_D4_dom"/>
</dbReference>
<dbReference type="InterPro" id="IPR004273">
    <property type="entry name" value="Dynein_heavy_D6_P-loop"/>
</dbReference>
<dbReference type="InterPro" id="IPR013602">
    <property type="entry name" value="Dynein_heavy_linker"/>
</dbReference>
<dbReference type="InterPro" id="IPR013594">
    <property type="entry name" value="Dynein_heavy_tail"/>
</dbReference>
<dbReference type="InterPro" id="IPR042228">
    <property type="entry name" value="Dynein_linker_3"/>
</dbReference>
<dbReference type="InterPro" id="IPR027417">
    <property type="entry name" value="P-loop_NTPase"/>
</dbReference>
<dbReference type="PANTHER" id="PTHR46532:SF15">
    <property type="entry name" value="CYTOPLASMIC DYNEIN 2 HEAVY CHAIN 1"/>
    <property type="match status" value="1"/>
</dbReference>
<dbReference type="PANTHER" id="PTHR46532">
    <property type="entry name" value="MALE FERTILITY FACTOR KL5"/>
    <property type="match status" value="1"/>
</dbReference>
<dbReference type="Pfam" id="PF12774">
    <property type="entry name" value="AAA_6"/>
    <property type="match status" value="1"/>
</dbReference>
<dbReference type="Pfam" id="PF12775">
    <property type="entry name" value="AAA_7"/>
    <property type="match status" value="1"/>
</dbReference>
<dbReference type="Pfam" id="PF12780">
    <property type="entry name" value="AAA_8"/>
    <property type="match status" value="1"/>
</dbReference>
<dbReference type="Pfam" id="PF12781">
    <property type="entry name" value="AAA_9"/>
    <property type="match status" value="1"/>
</dbReference>
<dbReference type="Pfam" id="PF18198">
    <property type="entry name" value="AAA_lid_11"/>
    <property type="match status" value="1"/>
</dbReference>
<dbReference type="Pfam" id="PF08385">
    <property type="entry name" value="DHC_N1"/>
    <property type="match status" value="1"/>
</dbReference>
<dbReference type="Pfam" id="PF08393">
    <property type="entry name" value="DHC_N2"/>
    <property type="match status" value="1"/>
</dbReference>
<dbReference type="Pfam" id="PF22597">
    <property type="entry name" value="DYN_lid"/>
    <property type="match status" value="1"/>
</dbReference>
<dbReference type="Pfam" id="PF21264">
    <property type="entry name" value="DYNC2H1_AAA_dom"/>
    <property type="match status" value="1"/>
</dbReference>
<dbReference type="Pfam" id="PF18199">
    <property type="entry name" value="Dynein_C"/>
    <property type="match status" value="1"/>
</dbReference>
<dbReference type="Pfam" id="PF03028">
    <property type="entry name" value="Dynein_heavy"/>
    <property type="match status" value="1"/>
</dbReference>
<dbReference type="Pfam" id="PF12777">
    <property type="entry name" value="MT"/>
    <property type="match status" value="1"/>
</dbReference>
<dbReference type="SMART" id="SM00382">
    <property type="entry name" value="AAA"/>
    <property type="match status" value="3"/>
</dbReference>
<dbReference type="SUPFAM" id="SSF52540">
    <property type="entry name" value="P-loop containing nucleoside triphosphate hydrolases"/>
    <property type="match status" value="4"/>
</dbReference>
<accession>Q9JJ79</accession>
<accession>P70576</accession>
<accession>Q63167</accession>
<reference key="1">
    <citation type="journal article" date="2002" name="J. Cell Sci.">
        <title>Molecular structure of cytoplasmic dynein 2 and its distribution in neuronal and ciliated cells.</title>
        <authorList>
            <person name="Mikami A."/>
            <person name="Tynan S.H."/>
            <person name="Hama T."/>
            <person name="Luby-Phelps K."/>
            <person name="Saito T."/>
            <person name="Crandall J.E."/>
            <person name="Besharse J.C."/>
            <person name="Vallee R.B."/>
        </authorList>
    </citation>
    <scope>NUCLEOTIDE SEQUENCE [MRNA]</scope>
    <scope>INTERACTION WITH DYNC2LI1</scope>
    <scope>SUBCELLULAR LOCATION</scope>
    <source>
        <strain>Sprague-Dawley</strain>
        <tissue>Testis</tissue>
    </source>
</reference>
<reference key="2">
    <citation type="journal article" date="1996" name="Genomics">
        <title>Multiple mouse chromosomal loci for dynein-based motility.</title>
        <authorList>
            <person name="Vaughan K.T."/>
            <person name="Mikami A."/>
            <person name="Paschal B.M."/>
            <person name="Holzbaur E.L.F."/>
            <person name="Hughes S.M."/>
            <person name="Echeverri C.J."/>
            <person name="Moore K.J."/>
            <person name="Gilbert D.J."/>
            <person name="Copeland N.G."/>
            <person name="Jenkins N.A."/>
            <person name="Vallee R.B."/>
        </authorList>
    </citation>
    <scope>NUCLEOTIDE SEQUENCE [MRNA] OF 1665-1744</scope>
    <source>
        <tissue>Kidney</tissue>
    </source>
</reference>
<reference key="3">
    <citation type="journal article" date="1995" name="J. Cell Sci.">
        <title>Identification and molecular evolution of new dynein-like protein sequences in rat brain.</title>
        <authorList>
            <person name="Tanaka Y."/>
            <person name="Zhang Z."/>
            <person name="Hirokawa N."/>
        </authorList>
    </citation>
    <scope>NUCLEOTIDE SEQUENCE [MRNA] OF 1670-1860</scope>
    <scope>TISSUE SPECIFICITY</scope>
    <scope>DEVELOPMENTAL STAGE</scope>
    <source>
        <strain>Wistar</strain>
        <tissue>Brain</tissue>
    </source>
</reference>
<reference key="4">
    <citation type="journal article" date="1996" name="J. Cell Sci.">
        <title>A novel cytoplasmic dynein heavy chain: expression of DHC1b in mammalian ciliated epithelial cells.</title>
        <authorList>
            <person name="Criswell P.S."/>
            <person name="Ostrowski L.E."/>
            <person name="Asai D.J."/>
        </authorList>
    </citation>
    <scope>SUBCELLULAR LOCATION</scope>
    <scope>TISSUE SPECIFICITY</scope>
    <scope>INDUCTION</scope>
</reference>
<reference key="5">
    <citation type="journal article" date="1998" name="Mol. Biol. Cell">
        <title>Evidence for four cytoplasmic dynein heavy chain isoforms in rat testis.</title>
        <authorList>
            <person name="Criswell P.S."/>
            <person name="Asai D.J."/>
        </authorList>
    </citation>
    <scope>TISSUE SPECIFICITY</scope>
</reference>
<reference key="6">
    <citation type="journal article" date="2002" name="Mol. Biol. Cell">
        <title>Identification of a novel light intermediate chain (D2LIC) for mammalian cytoplasmic dynein 2.</title>
        <authorList>
            <person name="Grissom P.M."/>
            <person name="Vaisberg E.A."/>
            <person name="McIntosh J.R."/>
        </authorList>
    </citation>
    <scope>INTERACTION WITH DYNC2LI1</scope>
</reference>
<proteinExistence type="evidence at protein level"/>
<comment type="function">
    <text evidence="1">May function as a motor for intraflagellar retrograde transport. Functions in cilia biogenesis. May play a role in transport between endoplasmic reticulum and Golgi or organization of the Golgi in cells (By similarity).</text>
</comment>
<comment type="subunit">
    <text>The cytoplasmic dynein complex 2 is probably composed by a heavy chain DYNC2H1 homodimer and a number of DYNC2LI1 light intermediate chains.</text>
</comment>
<comment type="subcellular location">
    <subcellularLocation>
        <location evidence="4">Cytoplasm</location>
        <location evidence="4">Cytoskeleton</location>
        <location evidence="4">Cilium axoneme</location>
    </subcellularLocation>
    <subcellularLocation>
        <location evidence="2">Cell membrane</location>
        <topology evidence="2">Peripheral membrane protein</topology>
    </subcellularLocation>
    <subcellularLocation>
        <location evidence="4 6">Cytoplasm</location>
    </subcellularLocation>
    <text evidence="1">Localizes to the apical cytoplasm (PubMed:8832411). May localize to Golgi apparatus, cytoplasmic vesicle and endoplasmic reticulum (By similarity).</text>
</comment>
<comment type="tissue specificity">
    <text evidence="5 6 7">Widely expressed both in ciliated and unciliated tissues. Detected in brain and testis (at protein level).</text>
</comment>
<comment type="developmental stage">
    <text evidence="5">Expressed in adult and juvenile brain.</text>
</comment>
<comment type="induction">
    <text evidence="6">Up-regulated during ciliogenesis.</text>
</comment>
<comment type="similarity">
    <text evidence="8">Belongs to the dynein heavy chain family.</text>
</comment>
<organism>
    <name type="scientific">Rattus norvegicus</name>
    <name type="common">Rat</name>
    <dbReference type="NCBI Taxonomy" id="10116"/>
    <lineage>
        <taxon>Eukaryota</taxon>
        <taxon>Metazoa</taxon>
        <taxon>Chordata</taxon>
        <taxon>Craniata</taxon>
        <taxon>Vertebrata</taxon>
        <taxon>Euteleostomi</taxon>
        <taxon>Mammalia</taxon>
        <taxon>Eutheria</taxon>
        <taxon>Euarchontoglires</taxon>
        <taxon>Glires</taxon>
        <taxon>Rodentia</taxon>
        <taxon>Myomorpha</taxon>
        <taxon>Muroidea</taxon>
        <taxon>Muridae</taxon>
        <taxon>Murinae</taxon>
        <taxon>Rattus</taxon>
    </lineage>
</organism>
<gene>
    <name type="primary">Dync2h1</name>
    <name type="synonym">Dhc1b</name>
    <name type="synonym">Dlp4</name>
    <name type="synonym">Dnch2</name>
    <name type="synonym">Dnchc2</name>
</gene>
<feature type="chain" id="PRO_0000318745" description="Cytoplasmic dynein 2 heavy chain 1">
    <location>
        <begin position="1"/>
        <end position="4306"/>
    </location>
</feature>
<feature type="region of interest" description="Stem" evidence="1">
    <location>
        <begin position="1"/>
        <end position="1650"/>
    </location>
</feature>
<feature type="region of interest" description="AAA 1" evidence="1">
    <location>
        <begin position="1651"/>
        <end position="1875"/>
    </location>
</feature>
<feature type="region of interest" description="AAA 2" evidence="1">
    <location>
        <begin position="1941"/>
        <end position="2161"/>
    </location>
</feature>
<feature type="region of interest" description="AAA 3" evidence="1">
    <location>
        <begin position="2249"/>
        <end position="2505"/>
    </location>
</feature>
<feature type="region of interest" description="AAA 4" evidence="1">
    <location>
        <begin position="2617"/>
        <end position="2862"/>
    </location>
</feature>
<feature type="region of interest" description="Stalk" evidence="1">
    <location>
        <begin position="2880"/>
        <end position="3168"/>
    </location>
</feature>
<feature type="region of interest" description="AAA 5" evidence="1">
    <location>
        <begin position="3243"/>
        <end position="3472"/>
    </location>
</feature>
<feature type="region of interest" description="AAA 6" evidence="1">
    <location>
        <begin position="3689"/>
        <end position="3904"/>
    </location>
</feature>
<feature type="coiled-coil region" evidence="3">
    <location>
        <begin position="669"/>
        <end position="696"/>
    </location>
</feature>
<feature type="coiled-coil region" evidence="3">
    <location>
        <begin position="2896"/>
        <end position="2981"/>
    </location>
</feature>
<feature type="coiled-coil region" evidence="3">
    <location>
        <begin position="3108"/>
        <end position="3199"/>
    </location>
</feature>
<feature type="coiled-coil region" evidence="3">
    <location>
        <begin position="3407"/>
        <end position="3441"/>
    </location>
</feature>
<feature type="binding site" evidence="3">
    <location>
        <begin position="145"/>
        <end position="152"/>
    </location>
    <ligand>
        <name>ATP</name>
        <dbReference type="ChEBI" id="CHEBI:30616"/>
    </ligand>
</feature>
<feature type="binding site" evidence="3">
    <location>
        <begin position="1689"/>
        <end position="1696"/>
    </location>
    <ligand>
        <name>ATP</name>
        <dbReference type="ChEBI" id="CHEBI:30616"/>
    </ligand>
</feature>
<feature type="binding site" evidence="3">
    <location>
        <begin position="1979"/>
        <end position="1986"/>
    </location>
    <ligand>
        <name>ATP</name>
        <dbReference type="ChEBI" id="CHEBI:30616"/>
    </ligand>
</feature>
<feature type="binding site" evidence="3">
    <location>
        <begin position="2291"/>
        <end position="2298"/>
    </location>
    <ligand>
        <name>ATP</name>
        <dbReference type="ChEBI" id="CHEBI:30616"/>
    </ligand>
</feature>
<feature type="binding site" evidence="3">
    <location>
        <begin position="2655"/>
        <end position="2662"/>
    </location>
    <ligand>
        <name>ATP</name>
        <dbReference type="ChEBI" id="CHEBI:30616"/>
    </ligand>
</feature>
<feature type="sequence conflict" description="In Ref. 2; AAC52802." evidence="8" ref="2">
    <original>K</original>
    <variation>R</variation>
    <location>
        <position position="1670"/>
    </location>
</feature>
<feature type="sequence conflict" description="In Ref. 2; AAC52802." evidence="8" ref="2">
    <original>C</original>
    <variation>R</variation>
    <location>
        <position position="1715"/>
    </location>
</feature>
<feature type="sequence conflict" description="In Ref. 3; BAA05503." evidence="8" ref="3">
    <original>V</original>
    <variation>I</variation>
    <location>
        <position position="1781"/>
    </location>
</feature>
<name>DYHC2_RAT</name>